<name>PROA_ECO81</name>
<feature type="chain" id="PRO_1000193612" description="Gamma-glutamyl phosphate reductase">
    <location>
        <begin position="1"/>
        <end position="417"/>
    </location>
</feature>
<comment type="function">
    <text evidence="1">Catalyzes the NADPH-dependent reduction of L-glutamate 5-phosphate into L-glutamate 5-semialdehyde and phosphate. The product spontaneously undergoes cyclization to form 1-pyrroline-5-carboxylate.</text>
</comment>
<comment type="catalytic activity">
    <reaction evidence="1">
        <text>L-glutamate 5-semialdehyde + phosphate + NADP(+) = L-glutamyl 5-phosphate + NADPH + H(+)</text>
        <dbReference type="Rhea" id="RHEA:19541"/>
        <dbReference type="ChEBI" id="CHEBI:15378"/>
        <dbReference type="ChEBI" id="CHEBI:43474"/>
        <dbReference type="ChEBI" id="CHEBI:57783"/>
        <dbReference type="ChEBI" id="CHEBI:58066"/>
        <dbReference type="ChEBI" id="CHEBI:58274"/>
        <dbReference type="ChEBI" id="CHEBI:58349"/>
        <dbReference type="EC" id="1.2.1.41"/>
    </reaction>
</comment>
<comment type="pathway">
    <text evidence="1">Amino-acid biosynthesis; L-proline biosynthesis; L-glutamate 5-semialdehyde from L-glutamate: step 2/2.</text>
</comment>
<comment type="subcellular location">
    <subcellularLocation>
        <location evidence="1">Cytoplasm</location>
    </subcellularLocation>
</comment>
<comment type="similarity">
    <text evidence="1">Belongs to the gamma-glutamyl phosphate reductase family.</text>
</comment>
<keyword id="KW-0028">Amino-acid biosynthesis</keyword>
<keyword id="KW-0963">Cytoplasm</keyword>
<keyword id="KW-0521">NADP</keyword>
<keyword id="KW-0560">Oxidoreductase</keyword>
<keyword id="KW-0641">Proline biosynthesis</keyword>
<reference key="1">
    <citation type="journal article" date="2009" name="PLoS Genet.">
        <title>Organised genome dynamics in the Escherichia coli species results in highly diverse adaptive paths.</title>
        <authorList>
            <person name="Touchon M."/>
            <person name="Hoede C."/>
            <person name="Tenaillon O."/>
            <person name="Barbe V."/>
            <person name="Baeriswyl S."/>
            <person name="Bidet P."/>
            <person name="Bingen E."/>
            <person name="Bonacorsi S."/>
            <person name="Bouchier C."/>
            <person name="Bouvet O."/>
            <person name="Calteau A."/>
            <person name="Chiapello H."/>
            <person name="Clermont O."/>
            <person name="Cruveiller S."/>
            <person name="Danchin A."/>
            <person name="Diard M."/>
            <person name="Dossat C."/>
            <person name="Karoui M.E."/>
            <person name="Frapy E."/>
            <person name="Garry L."/>
            <person name="Ghigo J.M."/>
            <person name="Gilles A.M."/>
            <person name="Johnson J."/>
            <person name="Le Bouguenec C."/>
            <person name="Lescat M."/>
            <person name="Mangenot S."/>
            <person name="Martinez-Jehanne V."/>
            <person name="Matic I."/>
            <person name="Nassif X."/>
            <person name="Oztas S."/>
            <person name="Petit M.A."/>
            <person name="Pichon C."/>
            <person name="Rouy Z."/>
            <person name="Ruf C.S."/>
            <person name="Schneider D."/>
            <person name="Tourret J."/>
            <person name="Vacherie B."/>
            <person name="Vallenet D."/>
            <person name="Medigue C."/>
            <person name="Rocha E.P.C."/>
            <person name="Denamur E."/>
        </authorList>
    </citation>
    <scope>NUCLEOTIDE SEQUENCE [LARGE SCALE GENOMIC DNA]</scope>
    <source>
        <strain>ED1a</strain>
    </source>
</reference>
<accession>B7MQ79</accession>
<organism>
    <name type="scientific">Escherichia coli O81 (strain ED1a)</name>
    <dbReference type="NCBI Taxonomy" id="585397"/>
    <lineage>
        <taxon>Bacteria</taxon>
        <taxon>Pseudomonadati</taxon>
        <taxon>Pseudomonadota</taxon>
        <taxon>Gammaproteobacteria</taxon>
        <taxon>Enterobacterales</taxon>
        <taxon>Enterobacteriaceae</taxon>
        <taxon>Escherichia</taxon>
    </lineage>
</organism>
<sequence length="417" mass="44634">MLEQMGIAAKQASYKLAQLSSREKNRVLEKIADELEAQSESILNANAQDVADARANGLSEAMLDRLALTPARLKDIADDVRQVCNLADPVGQVIDGGVLDSGLRLERRRVPLGVIGVIYEARPNVTVDVASLCLKTGNAVILRGGKETCRTNAATVAVIQDALKSCGLPAGAVQAIDNPDRALVSEMLRMDKYIDMLIPRGGAGLHKLCREQSTIPVITGGIGVCHIYVDESAEIAEALKVIVNAKTQRPSTCNTVETLLVNKNIADSFLPALSKQMAESGVTLHADAAALAQLQAGPAKVVAVKAEEYDDEFLSLDLNVKIVSDLDDAIAHIREHGTQHSDAILTRDMRNAQRFVNEVDSSAVYVNASTRFTDGGQFGLGAEVAVSTQKLHARGPMGLEALTTYKWIGIGDYTIRA</sequence>
<proteinExistence type="inferred from homology"/>
<gene>
    <name evidence="1" type="primary">proA</name>
    <name type="ordered locus">ECED1_0277</name>
</gene>
<protein>
    <recommendedName>
        <fullName evidence="1">Gamma-glutamyl phosphate reductase</fullName>
        <shortName evidence="1">GPR</shortName>
        <ecNumber evidence="1">1.2.1.41</ecNumber>
    </recommendedName>
    <alternativeName>
        <fullName evidence="1">Glutamate-5-semialdehyde dehydrogenase</fullName>
    </alternativeName>
    <alternativeName>
        <fullName evidence="1">Glutamyl-gamma-semialdehyde dehydrogenase</fullName>
        <shortName evidence="1">GSA dehydrogenase</shortName>
    </alternativeName>
</protein>
<dbReference type="EC" id="1.2.1.41" evidence="1"/>
<dbReference type="EMBL" id="CU928162">
    <property type="protein sequence ID" value="CAR06491.1"/>
    <property type="molecule type" value="Genomic_DNA"/>
</dbReference>
<dbReference type="RefSeq" id="WP_000893304.1">
    <property type="nucleotide sequence ID" value="NC_011745.1"/>
</dbReference>
<dbReference type="SMR" id="B7MQ79"/>
<dbReference type="KEGG" id="ecq:ECED1_0277"/>
<dbReference type="HOGENOM" id="CLU_030231_0_0_6"/>
<dbReference type="UniPathway" id="UPA00098">
    <property type="reaction ID" value="UER00360"/>
</dbReference>
<dbReference type="Proteomes" id="UP000000748">
    <property type="component" value="Chromosome"/>
</dbReference>
<dbReference type="GO" id="GO:0005737">
    <property type="term" value="C:cytoplasm"/>
    <property type="evidence" value="ECO:0007669"/>
    <property type="project" value="UniProtKB-SubCell"/>
</dbReference>
<dbReference type="GO" id="GO:0004350">
    <property type="term" value="F:glutamate-5-semialdehyde dehydrogenase activity"/>
    <property type="evidence" value="ECO:0007669"/>
    <property type="project" value="UniProtKB-UniRule"/>
</dbReference>
<dbReference type="GO" id="GO:0050661">
    <property type="term" value="F:NADP binding"/>
    <property type="evidence" value="ECO:0007669"/>
    <property type="project" value="InterPro"/>
</dbReference>
<dbReference type="GO" id="GO:0055129">
    <property type="term" value="P:L-proline biosynthetic process"/>
    <property type="evidence" value="ECO:0007669"/>
    <property type="project" value="UniProtKB-UniRule"/>
</dbReference>
<dbReference type="CDD" id="cd07079">
    <property type="entry name" value="ALDH_F18-19_ProA-GPR"/>
    <property type="match status" value="1"/>
</dbReference>
<dbReference type="FunFam" id="3.40.309.10:FF:000006">
    <property type="entry name" value="Gamma-glutamyl phosphate reductase"/>
    <property type="match status" value="1"/>
</dbReference>
<dbReference type="Gene3D" id="3.40.605.10">
    <property type="entry name" value="Aldehyde Dehydrogenase, Chain A, domain 1"/>
    <property type="match status" value="1"/>
</dbReference>
<dbReference type="Gene3D" id="3.40.309.10">
    <property type="entry name" value="Aldehyde Dehydrogenase, Chain A, domain 2"/>
    <property type="match status" value="1"/>
</dbReference>
<dbReference type="HAMAP" id="MF_00412">
    <property type="entry name" value="ProA"/>
    <property type="match status" value="1"/>
</dbReference>
<dbReference type="InterPro" id="IPR016161">
    <property type="entry name" value="Ald_DH/histidinol_DH"/>
</dbReference>
<dbReference type="InterPro" id="IPR016163">
    <property type="entry name" value="Ald_DH_C"/>
</dbReference>
<dbReference type="InterPro" id="IPR016162">
    <property type="entry name" value="Ald_DH_N"/>
</dbReference>
<dbReference type="InterPro" id="IPR015590">
    <property type="entry name" value="Aldehyde_DH_dom"/>
</dbReference>
<dbReference type="InterPro" id="IPR020593">
    <property type="entry name" value="G-glutamylP_reductase_CS"/>
</dbReference>
<dbReference type="InterPro" id="IPR012134">
    <property type="entry name" value="Glu-5-SA_DH"/>
</dbReference>
<dbReference type="InterPro" id="IPR000965">
    <property type="entry name" value="GPR_dom"/>
</dbReference>
<dbReference type="NCBIfam" id="NF001221">
    <property type="entry name" value="PRK00197.1"/>
    <property type="match status" value="1"/>
</dbReference>
<dbReference type="NCBIfam" id="TIGR00407">
    <property type="entry name" value="proA"/>
    <property type="match status" value="1"/>
</dbReference>
<dbReference type="PANTHER" id="PTHR11063:SF8">
    <property type="entry name" value="DELTA-1-PYRROLINE-5-CARBOXYLATE SYNTHASE"/>
    <property type="match status" value="1"/>
</dbReference>
<dbReference type="PANTHER" id="PTHR11063">
    <property type="entry name" value="GLUTAMATE SEMIALDEHYDE DEHYDROGENASE"/>
    <property type="match status" value="1"/>
</dbReference>
<dbReference type="Pfam" id="PF00171">
    <property type="entry name" value="Aldedh"/>
    <property type="match status" value="1"/>
</dbReference>
<dbReference type="PIRSF" id="PIRSF000151">
    <property type="entry name" value="GPR"/>
    <property type="match status" value="1"/>
</dbReference>
<dbReference type="SUPFAM" id="SSF53720">
    <property type="entry name" value="ALDH-like"/>
    <property type="match status" value="1"/>
</dbReference>
<dbReference type="PROSITE" id="PS01223">
    <property type="entry name" value="PROA"/>
    <property type="match status" value="1"/>
</dbReference>
<evidence type="ECO:0000255" key="1">
    <source>
        <dbReference type="HAMAP-Rule" id="MF_00412"/>
    </source>
</evidence>